<proteinExistence type="inferred from homology"/>
<organism>
    <name type="scientific">Salmonella heidelberg (strain SL476)</name>
    <dbReference type="NCBI Taxonomy" id="454169"/>
    <lineage>
        <taxon>Bacteria</taxon>
        <taxon>Pseudomonadati</taxon>
        <taxon>Pseudomonadota</taxon>
        <taxon>Gammaproteobacteria</taxon>
        <taxon>Enterobacterales</taxon>
        <taxon>Enterobacteriaceae</taxon>
        <taxon>Salmonella</taxon>
    </lineage>
</organism>
<protein>
    <recommendedName>
        <fullName evidence="1">UPF0441 protein YgiB</fullName>
    </recommendedName>
</protein>
<reference key="1">
    <citation type="journal article" date="2011" name="J. Bacteriol.">
        <title>Comparative genomics of 28 Salmonella enterica isolates: evidence for CRISPR-mediated adaptive sublineage evolution.</title>
        <authorList>
            <person name="Fricke W.F."/>
            <person name="Mammel M.K."/>
            <person name="McDermott P.F."/>
            <person name="Tartera C."/>
            <person name="White D.G."/>
            <person name="Leclerc J.E."/>
            <person name="Ravel J."/>
            <person name="Cebula T.A."/>
        </authorList>
    </citation>
    <scope>NUCLEOTIDE SEQUENCE [LARGE SCALE GENOMIC DNA]</scope>
    <source>
        <strain>SL476</strain>
    </source>
</reference>
<feature type="chain" id="PRO_1000138351" description="UPF0441 protein YgiB">
    <location>
        <begin position="1"/>
        <end position="223"/>
    </location>
</feature>
<feature type="region of interest" description="Disordered" evidence="2">
    <location>
        <begin position="178"/>
        <end position="223"/>
    </location>
</feature>
<feature type="compositionally biased region" description="Low complexity" evidence="2">
    <location>
        <begin position="178"/>
        <end position="195"/>
    </location>
</feature>
<feature type="compositionally biased region" description="Polar residues" evidence="2">
    <location>
        <begin position="204"/>
        <end position="223"/>
    </location>
</feature>
<name>YGIB_SALHS</name>
<accession>B4TI37</accession>
<evidence type="ECO:0000255" key="1">
    <source>
        <dbReference type="HAMAP-Rule" id="MF_01188"/>
    </source>
</evidence>
<evidence type="ECO:0000256" key="2">
    <source>
        <dbReference type="SAM" id="MobiDB-lite"/>
    </source>
</evidence>
<gene>
    <name evidence="1" type="primary">ygiB</name>
    <name type="ordered locus">SeHA_C3438</name>
</gene>
<dbReference type="EMBL" id="CP001120">
    <property type="protein sequence ID" value="ACF68555.1"/>
    <property type="molecule type" value="Genomic_DNA"/>
</dbReference>
<dbReference type="RefSeq" id="WP_000831520.1">
    <property type="nucleotide sequence ID" value="NC_011083.1"/>
</dbReference>
<dbReference type="KEGG" id="seh:SeHA_C3438"/>
<dbReference type="HOGENOM" id="CLU_095624_0_0_6"/>
<dbReference type="Proteomes" id="UP000001866">
    <property type="component" value="Chromosome"/>
</dbReference>
<dbReference type="HAMAP" id="MF_01188">
    <property type="entry name" value="UPF0441"/>
    <property type="match status" value="1"/>
</dbReference>
<dbReference type="InterPro" id="IPR009576">
    <property type="entry name" value="Biofilm_formation_YgiB"/>
</dbReference>
<dbReference type="NCBIfam" id="NF008655">
    <property type="entry name" value="PRK11653.1"/>
    <property type="match status" value="1"/>
</dbReference>
<dbReference type="Pfam" id="PF06693">
    <property type="entry name" value="DUF1190"/>
    <property type="match status" value="1"/>
</dbReference>
<sequence>MKRTKSIHHASFRKSWGARHLTPVALAVTAVFMLAGCEKSDETVSLYQNADDCSAANPGKSAECTTAYNNALKEAERTAPKYATREDCVAEFGEGQCQQAPAQAGMAPENQAQAQQSSGSFWMPLMAGYMMGRLMGGGAGFAQQPLFSSKNPASPAYGKYTDAAGKNYGAAQPGRTMTVPKTAMAPKPATTTTVTRGGFGESVAKQSTMQRSAAGTSTRSMGG</sequence>
<comment type="similarity">
    <text evidence="1">Belongs to the UPF0441 family.</text>
</comment>